<proteinExistence type="evidence at protein level"/>
<reference key="1">
    <citation type="journal article" date="2001" name="J. Biol. Chem.">
        <title>Rh type B glycoprotein is a new member of the Rh superfamily and a putative ammonia transporter in mammals.</title>
        <authorList>
            <person name="Liu Z."/>
            <person name="Peng J."/>
            <person name="Mo R."/>
            <person name="Hui C.-C."/>
            <person name="Huang C.-H."/>
        </authorList>
    </citation>
    <scope>NUCLEOTIDE SEQUENCE [GENOMIC DNA / MRNA] (ISOFORM 1)</scope>
    <scope>DEVELOPMENTAL STAGE</scope>
    <scope>TISSUE SPECIFICITY</scope>
    <scope>SUBCELLULAR LOCATION</scope>
    <scope>GLYCOSYLATION</scope>
    <source>
        <tissue>Liver</tissue>
    </source>
</reference>
<reference key="2">
    <citation type="submission" date="2002-08" db="EMBL/GenBank/DDBJ databases">
        <title>Characterization of alternatively spliced Rh type B glycoprotein (RhBG) isoforms in human tissues resulting from exonic inclusion of Alu repeat like sequences.</title>
        <authorList>
            <person name="Liu Z."/>
            <person name="Chen Y."/>
            <person name="Huang C.-H."/>
        </authorList>
    </citation>
    <scope>NUCLEOTIDE SEQUENCE [MRNA] (ISOFORMS 2 AND 4)</scope>
    <source>
        <tissue>Liver</tissue>
    </source>
</reference>
<reference key="3">
    <citation type="journal article" date="2004" name="Nat. Genet.">
        <title>Complete sequencing and characterization of 21,243 full-length human cDNAs.</title>
        <authorList>
            <person name="Ota T."/>
            <person name="Suzuki Y."/>
            <person name="Nishikawa T."/>
            <person name="Otsuki T."/>
            <person name="Sugiyama T."/>
            <person name="Irie R."/>
            <person name="Wakamatsu A."/>
            <person name="Hayashi K."/>
            <person name="Sato H."/>
            <person name="Nagai K."/>
            <person name="Kimura K."/>
            <person name="Makita H."/>
            <person name="Sekine M."/>
            <person name="Obayashi M."/>
            <person name="Nishi T."/>
            <person name="Shibahara T."/>
            <person name="Tanaka T."/>
            <person name="Ishii S."/>
            <person name="Yamamoto J."/>
            <person name="Saito K."/>
            <person name="Kawai Y."/>
            <person name="Isono Y."/>
            <person name="Nakamura Y."/>
            <person name="Nagahari K."/>
            <person name="Murakami K."/>
            <person name="Yasuda T."/>
            <person name="Iwayanagi T."/>
            <person name="Wagatsuma M."/>
            <person name="Shiratori A."/>
            <person name="Sudo H."/>
            <person name="Hosoiri T."/>
            <person name="Kaku Y."/>
            <person name="Kodaira H."/>
            <person name="Kondo H."/>
            <person name="Sugawara M."/>
            <person name="Takahashi M."/>
            <person name="Kanda K."/>
            <person name="Yokoi T."/>
            <person name="Furuya T."/>
            <person name="Kikkawa E."/>
            <person name="Omura Y."/>
            <person name="Abe K."/>
            <person name="Kamihara K."/>
            <person name="Katsuta N."/>
            <person name="Sato K."/>
            <person name="Tanikawa M."/>
            <person name="Yamazaki M."/>
            <person name="Ninomiya K."/>
            <person name="Ishibashi T."/>
            <person name="Yamashita H."/>
            <person name="Murakawa K."/>
            <person name="Fujimori K."/>
            <person name="Tanai H."/>
            <person name="Kimata M."/>
            <person name="Watanabe M."/>
            <person name="Hiraoka S."/>
            <person name="Chiba Y."/>
            <person name="Ishida S."/>
            <person name="Ono Y."/>
            <person name="Takiguchi S."/>
            <person name="Watanabe S."/>
            <person name="Yosida M."/>
            <person name="Hotuta T."/>
            <person name="Kusano J."/>
            <person name="Kanehori K."/>
            <person name="Takahashi-Fujii A."/>
            <person name="Hara H."/>
            <person name="Tanase T.-O."/>
            <person name="Nomura Y."/>
            <person name="Togiya S."/>
            <person name="Komai F."/>
            <person name="Hara R."/>
            <person name="Takeuchi K."/>
            <person name="Arita M."/>
            <person name="Imose N."/>
            <person name="Musashino K."/>
            <person name="Yuuki H."/>
            <person name="Oshima A."/>
            <person name="Sasaki N."/>
            <person name="Aotsuka S."/>
            <person name="Yoshikawa Y."/>
            <person name="Matsunawa H."/>
            <person name="Ichihara T."/>
            <person name="Shiohata N."/>
            <person name="Sano S."/>
            <person name="Moriya S."/>
            <person name="Momiyama H."/>
            <person name="Satoh N."/>
            <person name="Takami S."/>
            <person name="Terashima Y."/>
            <person name="Suzuki O."/>
            <person name="Nakagawa S."/>
            <person name="Senoh A."/>
            <person name="Mizoguchi H."/>
            <person name="Goto Y."/>
            <person name="Shimizu F."/>
            <person name="Wakebe H."/>
            <person name="Hishigaki H."/>
            <person name="Watanabe T."/>
            <person name="Sugiyama A."/>
            <person name="Takemoto M."/>
            <person name="Kawakami B."/>
            <person name="Yamazaki M."/>
            <person name="Watanabe K."/>
            <person name="Kumagai A."/>
            <person name="Itakura S."/>
            <person name="Fukuzumi Y."/>
            <person name="Fujimori Y."/>
            <person name="Komiyama M."/>
            <person name="Tashiro H."/>
            <person name="Tanigami A."/>
            <person name="Fujiwara T."/>
            <person name="Ono T."/>
            <person name="Yamada K."/>
            <person name="Fujii Y."/>
            <person name="Ozaki K."/>
            <person name="Hirao M."/>
            <person name="Ohmori Y."/>
            <person name="Kawabata A."/>
            <person name="Hikiji T."/>
            <person name="Kobatake N."/>
            <person name="Inagaki H."/>
            <person name="Ikema Y."/>
            <person name="Okamoto S."/>
            <person name="Okitani R."/>
            <person name="Kawakami T."/>
            <person name="Noguchi S."/>
            <person name="Itoh T."/>
            <person name="Shigeta K."/>
            <person name="Senba T."/>
            <person name="Matsumura K."/>
            <person name="Nakajima Y."/>
            <person name="Mizuno T."/>
            <person name="Morinaga M."/>
            <person name="Sasaki M."/>
            <person name="Togashi T."/>
            <person name="Oyama M."/>
            <person name="Hata H."/>
            <person name="Watanabe M."/>
            <person name="Komatsu T."/>
            <person name="Mizushima-Sugano J."/>
            <person name="Satoh T."/>
            <person name="Shirai Y."/>
            <person name="Takahashi Y."/>
            <person name="Nakagawa K."/>
            <person name="Okumura K."/>
            <person name="Nagase T."/>
            <person name="Nomura N."/>
            <person name="Kikuchi H."/>
            <person name="Masuho Y."/>
            <person name="Yamashita R."/>
            <person name="Nakai K."/>
            <person name="Yada T."/>
            <person name="Nakamura Y."/>
            <person name="Ohara O."/>
            <person name="Isogai T."/>
            <person name="Sugano S."/>
        </authorList>
    </citation>
    <scope>NUCLEOTIDE SEQUENCE [LARGE SCALE MRNA] (ISOFORM 5)</scope>
    <scope>VARIANT ASP-76</scope>
    <source>
        <tissue>Cerebellum</tissue>
        <tissue>Liver</tissue>
    </source>
</reference>
<reference key="4">
    <citation type="journal article" date="2006" name="Nature">
        <title>The DNA sequence and biological annotation of human chromosome 1.</title>
        <authorList>
            <person name="Gregory S.G."/>
            <person name="Barlow K.F."/>
            <person name="McLay K.E."/>
            <person name="Kaul R."/>
            <person name="Swarbreck D."/>
            <person name="Dunham A."/>
            <person name="Scott C.E."/>
            <person name="Howe K.L."/>
            <person name="Woodfine K."/>
            <person name="Spencer C.C.A."/>
            <person name="Jones M.C."/>
            <person name="Gillson C."/>
            <person name="Searle S."/>
            <person name="Zhou Y."/>
            <person name="Kokocinski F."/>
            <person name="McDonald L."/>
            <person name="Evans R."/>
            <person name="Phillips K."/>
            <person name="Atkinson A."/>
            <person name="Cooper R."/>
            <person name="Jones C."/>
            <person name="Hall R.E."/>
            <person name="Andrews T.D."/>
            <person name="Lloyd C."/>
            <person name="Ainscough R."/>
            <person name="Almeida J.P."/>
            <person name="Ambrose K.D."/>
            <person name="Anderson F."/>
            <person name="Andrew R.W."/>
            <person name="Ashwell R.I.S."/>
            <person name="Aubin K."/>
            <person name="Babbage A.K."/>
            <person name="Bagguley C.L."/>
            <person name="Bailey J."/>
            <person name="Beasley H."/>
            <person name="Bethel G."/>
            <person name="Bird C.P."/>
            <person name="Bray-Allen S."/>
            <person name="Brown J.Y."/>
            <person name="Brown A.J."/>
            <person name="Buckley D."/>
            <person name="Burton J."/>
            <person name="Bye J."/>
            <person name="Carder C."/>
            <person name="Chapman J.C."/>
            <person name="Clark S.Y."/>
            <person name="Clarke G."/>
            <person name="Clee C."/>
            <person name="Cobley V."/>
            <person name="Collier R.E."/>
            <person name="Corby N."/>
            <person name="Coville G.J."/>
            <person name="Davies J."/>
            <person name="Deadman R."/>
            <person name="Dunn M."/>
            <person name="Earthrowl M."/>
            <person name="Ellington A.G."/>
            <person name="Errington H."/>
            <person name="Frankish A."/>
            <person name="Frankland J."/>
            <person name="French L."/>
            <person name="Garner P."/>
            <person name="Garnett J."/>
            <person name="Gay L."/>
            <person name="Ghori M.R.J."/>
            <person name="Gibson R."/>
            <person name="Gilby L.M."/>
            <person name="Gillett W."/>
            <person name="Glithero R.J."/>
            <person name="Grafham D.V."/>
            <person name="Griffiths C."/>
            <person name="Griffiths-Jones S."/>
            <person name="Grocock R."/>
            <person name="Hammond S."/>
            <person name="Harrison E.S.I."/>
            <person name="Hart E."/>
            <person name="Haugen E."/>
            <person name="Heath P.D."/>
            <person name="Holmes S."/>
            <person name="Holt K."/>
            <person name="Howden P.J."/>
            <person name="Hunt A.R."/>
            <person name="Hunt S.E."/>
            <person name="Hunter G."/>
            <person name="Isherwood J."/>
            <person name="James R."/>
            <person name="Johnson C."/>
            <person name="Johnson D."/>
            <person name="Joy A."/>
            <person name="Kay M."/>
            <person name="Kershaw J.K."/>
            <person name="Kibukawa M."/>
            <person name="Kimberley A.M."/>
            <person name="King A."/>
            <person name="Knights A.J."/>
            <person name="Lad H."/>
            <person name="Laird G."/>
            <person name="Lawlor S."/>
            <person name="Leongamornlert D.A."/>
            <person name="Lloyd D.M."/>
            <person name="Loveland J."/>
            <person name="Lovell J."/>
            <person name="Lush M.J."/>
            <person name="Lyne R."/>
            <person name="Martin S."/>
            <person name="Mashreghi-Mohammadi M."/>
            <person name="Matthews L."/>
            <person name="Matthews N.S.W."/>
            <person name="McLaren S."/>
            <person name="Milne S."/>
            <person name="Mistry S."/>
            <person name="Moore M.J.F."/>
            <person name="Nickerson T."/>
            <person name="O'Dell C.N."/>
            <person name="Oliver K."/>
            <person name="Palmeiri A."/>
            <person name="Palmer S.A."/>
            <person name="Parker A."/>
            <person name="Patel D."/>
            <person name="Pearce A.V."/>
            <person name="Peck A.I."/>
            <person name="Pelan S."/>
            <person name="Phelps K."/>
            <person name="Phillimore B.J."/>
            <person name="Plumb R."/>
            <person name="Rajan J."/>
            <person name="Raymond C."/>
            <person name="Rouse G."/>
            <person name="Saenphimmachak C."/>
            <person name="Sehra H.K."/>
            <person name="Sheridan E."/>
            <person name="Shownkeen R."/>
            <person name="Sims S."/>
            <person name="Skuce C.D."/>
            <person name="Smith M."/>
            <person name="Steward C."/>
            <person name="Subramanian S."/>
            <person name="Sycamore N."/>
            <person name="Tracey A."/>
            <person name="Tromans A."/>
            <person name="Van Helmond Z."/>
            <person name="Wall M."/>
            <person name="Wallis J.M."/>
            <person name="White S."/>
            <person name="Whitehead S.L."/>
            <person name="Wilkinson J.E."/>
            <person name="Willey D.L."/>
            <person name="Williams H."/>
            <person name="Wilming L."/>
            <person name="Wray P.W."/>
            <person name="Wu Z."/>
            <person name="Coulson A."/>
            <person name="Vaudin M."/>
            <person name="Sulston J.E."/>
            <person name="Durbin R.M."/>
            <person name="Hubbard T."/>
            <person name="Wooster R."/>
            <person name="Dunham I."/>
            <person name="Carter N.P."/>
            <person name="McVean G."/>
            <person name="Ross M.T."/>
            <person name="Harrow J."/>
            <person name="Olson M.V."/>
            <person name="Beck S."/>
            <person name="Rogers J."/>
            <person name="Bentley D.R."/>
        </authorList>
    </citation>
    <scope>NUCLEOTIDE SEQUENCE [LARGE SCALE GENOMIC DNA]</scope>
</reference>
<reference key="5">
    <citation type="submission" date="2005-09" db="EMBL/GenBank/DDBJ databases">
        <authorList>
            <person name="Mural R.J."/>
            <person name="Istrail S."/>
            <person name="Sutton G.G."/>
            <person name="Florea L."/>
            <person name="Halpern A.L."/>
            <person name="Mobarry C.M."/>
            <person name="Lippert R."/>
            <person name="Walenz B."/>
            <person name="Shatkay H."/>
            <person name="Dew I."/>
            <person name="Miller J.R."/>
            <person name="Flanigan M.J."/>
            <person name="Edwards N.J."/>
            <person name="Bolanos R."/>
            <person name="Fasulo D."/>
            <person name="Halldorsson B.V."/>
            <person name="Hannenhalli S."/>
            <person name="Turner R."/>
            <person name="Yooseph S."/>
            <person name="Lu F."/>
            <person name="Nusskern D.R."/>
            <person name="Shue B.C."/>
            <person name="Zheng X.H."/>
            <person name="Zhong F."/>
            <person name="Delcher A.L."/>
            <person name="Huson D.H."/>
            <person name="Kravitz S.A."/>
            <person name="Mouchard L."/>
            <person name="Reinert K."/>
            <person name="Remington K.A."/>
            <person name="Clark A.G."/>
            <person name="Waterman M.S."/>
            <person name="Eichler E.E."/>
            <person name="Adams M.D."/>
            <person name="Hunkapiller M.W."/>
            <person name="Myers E.W."/>
            <person name="Venter J.C."/>
        </authorList>
    </citation>
    <scope>NUCLEOTIDE SEQUENCE [LARGE SCALE GENOMIC DNA]</scope>
    <scope>VARIANT ASP-76</scope>
</reference>
<reference key="6">
    <citation type="journal article" date="2004" name="Genome Res.">
        <title>The status, quality, and expansion of the NIH full-length cDNA project: the Mammalian Gene Collection (MGC).</title>
        <authorList>
            <consortium name="The MGC Project Team"/>
        </authorList>
    </citation>
    <scope>NUCLEOTIDE SEQUENCE [LARGE SCALE MRNA] (ISOFORM 3)</scope>
    <scope>VARIANTS ASP-143 AND ARG-315</scope>
    <source>
        <tissue>Ovary</tissue>
    </source>
</reference>
<reference key="7">
    <citation type="journal article" date="2004" name="J. Physiol. (Lond.)">
        <title>Electroneutral ammonium transport by basolateral rhesus B glycoprotein.</title>
        <authorList>
            <person name="Ludewig U."/>
        </authorList>
    </citation>
    <scope>FUNCTION</scope>
    <scope>TRANSPORTER ACTIVITY</scope>
    <scope>BIOPHYSICOCHEMICAL PROPERTIES</scope>
</reference>
<reference key="8">
    <citation type="journal article" date="2005" name="Biochem. J.">
        <title>Human Rhesus B and Rhesus C glycoproteins: properties of facilitated ammonium transport in recombinant kidney cells.</title>
        <authorList>
            <person name="Zidi-Yahiaoui N."/>
            <person name="Mouro-Chanteloup I."/>
            <person name="D'Ambrosio A.-M."/>
            <person name="Lopez C."/>
            <person name="Gane P."/>
            <person name="Le van Kim C."/>
            <person name="Cartron J.-P."/>
            <person name="Colin Y."/>
            <person name="Ripoche P."/>
        </authorList>
    </citation>
    <scope>FUNCTION</scope>
    <scope>TRANSPORTER ACTIVITY</scope>
    <scope>SUBCELLULAR LOCATION</scope>
</reference>
<reference key="9">
    <citation type="journal article" date="2005" name="J. Biol. Chem.">
        <title>The ammonium transporter RhBG: requirement of a tyrosine-based signal and ankyrin-G for basolateral targeting and membrane anchorage in polarized kidney epithelial cells.</title>
        <authorList>
            <person name="Lopez C."/>
            <person name="Metral S."/>
            <person name="Eladari D."/>
            <person name="Drevensek S."/>
            <person name="Gane P."/>
            <person name="Chambrey R."/>
            <person name="Bennett V."/>
            <person name="Cartron J.-P."/>
            <person name="Le Van Kim C."/>
            <person name="Colin Y."/>
        </authorList>
    </citation>
    <scope>SUBCELLULAR LOCATION</scope>
    <scope>MUTAGENESIS OF PHE-419; LEU-420 AND ASP-421</scope>
    <scope>INTERACTION WITH ANK2 AND ANK3</scope>
</reference>
<reference key="10">
    <citation type="journal article" date="2013" name="J. Membr. Biol.">
        <title>Relative CO(2)/NH(3) permeabilities of human RhAG, RhBG and RhCG.</title>
        <authorList>
            <person name="Geyer R.R."/>
            <person name="Parker M.D."/>
            <person name="Toye A.M."/>
            <person name="Boron W.F."/>
            <person name="Musa-Aziz R."/>
        </authorList>
    </citation>
    <scope>FUNCTION</scope>
    <scope>TRANSPORTER ACTIVITY</scope>
    <scope>MUTAGENESIS OF ASP-178</scope>
</reference>
<evidence type="ECO:0000250" key="1"/>
<evidence type="ECO:0000255" key="2"/>
<evidence type="ECO:0000256" key="3">
    <source>
        <dbReference type="SAM" id="MobiDB-lite"/>
    </source>
</evidence>
<evidence type="ECO:0000269" key="4">
    <source>
    </source>
</evidence>
<evidence type="ECO:0000269" key="5">
    <source>
    </source>
</evidence>
<evidence type="ECO:0000269" key="6">
    <source>
    </source>
</evidence>
<evidence type="ECO:0000269" key="7">
    <source>
    </source>
</evidence>
<evidence type="ECO:0000269" key="8">
    <source>
    </source>
</evidence>
<evidence type="ECO:0000269" key="9">
    <source>
    </source>
</evidence>
<evidence type="ECO:0000269" key="10">
    <source>
    </source>
</evidence>
<evidence type="ECO:0000269" key="11">
    <source ref="5"/>
</evidence>
<evidence type="ECO:0000303" key="12">
    <source>
    </source>
</evidence>
<evidence type="ECO:0000303" key="13">
    <source>
    </source>
</evidence>
<evidence type="ECO:0000303" key="14">
    <source ref="2"/>
</evidence>
<evidence type="ECO:0000305" key="15"/>
<evidence type="ECO:0000305" key="16">
    <source>
    </source>
</evidence>
<evidence type="ECO:0000305" key="17">
    <source>
    </source>
</evidence>
<evidence type="ECO:0000305" key="18">
    <source>
    </source>
</evidence>
<evidence type="ECO:0000312" key="19">
    <source>
        <dbReference type="HGNC" id="HGNC:14572"/>
    </source>
</evidence>
<dbReference type="EMBL" id="AF193807">
    <property type="protein sequence ID" value="AAG01086.1"/>
    <property type="molecule type" value="mRNA"/>
</dbReference>
<dbReference type="EMBL" id="AF219980">
    <property type="protein sequence ID" value="AAL05978.1"/>
    <property type="molecule type" value="Genomic_DNA"/>
</dbReference>
<dbReference type="EMBL" id="AF219977">
    <property type="protein sequence ID" value="AAL05978.1"/>
    <property type="status" value="JOINED"/>
    <property type="molecule type" value="Genomic_DNA"/>
</dbReference>
<dbReference type="EMBL" id="AF219978">
    <property type="protein sequence ID" value="AAL05978.1"/>
    <property type="status" value="JOINED"/>
    <property type="molecule type" value="Genomic_DNA"/>
</dbReference>
<dbReference type="EMBL" id="AF219979">
    <property type="protein sequence ID" value="AAL05978.1"/>
    <property type="status" value="JOINED"/>
    <property type="molecule type" value="Genomic_DNA"/>
</dbReference>
<dbReference type="EMBL" id="AY139092">
    <property type="protein sequence ID" value="AAN34363.1"/>
    <property type="molecule type" value="mRNA"/>
</dbReference>
<dbReference type="EMBL" id="AY139093">
    <property type="protein sequence ID" value="AAN34364.1"/>
    <property type="molecule type" value="mRNA"/>
</dbReference>
<dbReference type="EMBL" id="AK054780">
    <property type="protein sequence ID" value="BAG51423.1"/>
    <property type="molecule type" value="mRNA"/>
</dbReference>
<dbReference type="EMBL" id="AK290840">
    <property type="protein sequence ID" value="BAF83529.1"/>
    <property type="molecule type" value="mRNA"/>
</dbReference>
<dbReference type="EMBL" id="AL139130">
    <property type="status" value="NOT_ANNOTATED_CDS"/>
    <property type="molecule type" value="Genomic_DNA"/>
</dbReference>
<dbReference type="EMBL" id="AL589685">
    <property type="status" value="NOT_ANNOTATED_CDS"/>
    <property type="molecule type" value="Genomic_DNA"/>
</dbReference>
<dbReference type="EMBL" id="CH471121">
    <property type="protein sequence ID" value="EAW52961.1"/>
    <property type="molecule type" value="Genomic_DNA"/>
</dbReference>
<dbReference type="EMBL" id="BC065218">
    <property type="protein sequence ID" value="AAH65218.1"/>
    <property type="status" value="ALT_FRAME"/>
    <property type="molecule type" value="mRNA"/>
</dbReference>
<dbReference type="CCDS" id="CCDS41414.2">
    <molecule id="Q9H310-1"/>
</dbReference>
<dbReference type="RefSeq" id="NP_001243324.1">
    <molecule id="Q9H310-4"/>
    <property type="nucleotide sequence ID" value="NM_001256395.2"/>
</dbReference>
<dbReference type="RefSeq" id="NP_001243325.1">
    <molecule id="Q9H310-2"/>
    <property type="nucleotide sequence ID" value="NM_001256396.2"/>
</dbReference>
<dbReference type="RefSeq" id="NP_065140.3">
    <molecule id="Q9H310-1"/>
    <property type="nucleotide sequence ID" value="NM_020407.5"/>
</dbReference>
<dbReference type="SMR" id="Q9H310"/>
<dbReference type="BioGRID" id="121390">
    <property type="interactions" value="4"/>
</dbReference>
<dbReference type="CORUM" id="Q9H310"/>
<dbReference type="FunCoup" id="Q9H310">
    <property type="interactions" value="48"/>
</dbReference>
<dbReference type="IntAct" id="Q9H310">
    <property type="interactions" value="4"/>
</dbReference>
<dbReference type="STRING" id="9606.ENSP00000441197"/>
<dbReference type="TCDB" id="1.A.11.4.2">
    <property type="family name" value="the ammonium transporter channel (amt) family"/>
</dbReference>
<dbReference type="GlyCosmos" id="Q9H310">
    <property type="glycosylation" value="1 site, No reported glycans"/>
</dbReference>
<dbReference type="GlyGen" id="Q9H310">
    <property type="glycosylation" value="1 site"/>
</dbReference>
<dbReference type="iPTMnet" id="Q9H310"/>
<dbReference type="PhosphoSitePlus" id="Q9H310"/>
<dbReference type="BioMuta" id="RHBG"/>
<dbReference type="DMDM" id="209572666"/>
<dbReference type="jPOST" id="Q9H310"/>
<dbReference type="MassIVE" id="Q9H310"/>
<dbReference type="PaxDb" id="9606-ENSP00000441197"/>
<dbReference type="PeptideAtlas" id="Q9H310"/>
<dbReference type="Antibodypedia" id="34214">
    <property type="antibodies" value="120 antibodies from 25 providers"/>
</dbReference>
<dbReference type="DNASU" id="57127"/>
<dbReference type="Ensembl" id="ENST00000537040.6">
    <molecule id="Q9H310-1"/>
    <property type="protein sequence ID" value="ENSP00000441197.2"/>
    <property type="gene ID" value="ENSG00000132677.13"/>
</dbReference>
<dbReference type="GeneID" id="57127"/>
<dbReference type="KEGG" id="hsa:57127"/>
<dbReference type="MANE-Select" id="ENST00000537040.6">
    <property type="protein sequence ID" value="ENSP00000441197.2"/>
    <property type="RefSeq nucleotide sequence ID" value="NM_020407.5"/>
    <property type="RefSeq protein sequence ID" value="NP_065140.3"/>
</dbReference>
<dbReference type="UCSC" id="uc031vbi.2">
    <molecule id="Q9H310-1"/>
    <property type="organism name" value="human"/>
</dbReference>
<dbReference type="AGR" id="HGNC:14572"/>
<dbReference type="CTD" id="57127"/>
<dbReference type="DisGeNET" id="57127"/>
<dbReference type="GeneCards" id="RHBG"/>
<dbReference type="HGNC" id="HGNC:14572">
    <property type="gene designation" value="RHBG"/>
</dbReference>
<dbReference type="HPA" id="ENSG00000132677">
    <property type="expression patterns" value="Tissue enhanced (brain, kidney)"/>
</dbReference>
<dbReference type="MIM" id="607079">
    <property type="type" value="gene"/>
</dbReference>
<dbReference type="neXtProt" id="NX_Q9H310"/>
<dbReference type="OpenTargets" id="ENSG00000132677"/>
<dbReference type="PharmGKB" id="PA34385"/>
<dbReference type="VEuPathDB" id="HostDB:ENSG00000132677"/>
<dbReference type="eggNOG" id="KOG3796">
    <property type="taxonomic scope" value="Eukaryota"/>
</dbReference>
<dbReference type="GeneTree" id="ENSGT00950000182844"/>
<dbReference type="HOGENOM" id="CLU_021386_0_0_1"/>
<dbReference type="InParanoid" id="Q9H310"/>
<dbReference type="OMA" id="DNIYWEV"/>
<dbReference type="OrthoDB" id="534912at2759"/>
<dbReference type="PAN-GO" id="Q9H310">
    <property type="GO annotations" value="4 GO annotations based on evolutionary models"/>
</dbReference>
<dbReference type="PhylomeDB" id="Q9H310"/>
<dbReference type="TreeFam" id="TF314450"/>
<dbReference type="PathwayCommons" id="Q9H310"/>
<dbReference type="Reactome" id="R-HSA-444411">
    <property type="pathway name" value="Rhesus glycoproteins mediate ammonium transport"/>
</dbReference>
<dbReference type="SignaLink" id="Q9H310"/>
<dbReference type="BioGRID-ORCS" id="57127">
    <property type="hits" value="25 hits in 284 CRISPR screens"/>
</dbReference>
<dbReference type="ChiTaRS" id="RHBG">
    <property type="organism name" value="human"/>
</dbReference>
<dbReference type="GeneWiki" id="RHBG"/>
<dbReference type="GenomeRNAi" id="57127"/>
<dbReference type="Pharos" id="Q9H310">
    <property type="development level" value="Tbio"/>
</dbReference>
<dbReference type="PRO" id="PR:Q9H310"/>
<dbReference type="Proteomes" id="UP000005640">
    <property type="component" value="Chromosome 1"/>
</dbReference>
<dbReference type="RNAct" id="Q9H310">
    <property type="molecule type" value="protein"/>
</dbReference>
<dbReference type="Bgee" id="ENSG00000132677">
    <property type="expression patterns" value="Expressed in cerebellar cortex and 112 other cell types or tissues"/>
</dbReference>
<dbReference type="ExpressionAtlas" id="Q9H310">
    <property type="expression patterns" value="baseline and differential"/>
</dbReference>
<dbReference type="GO" id="GO:0016323">
    <property type="term" value="C:basolateral plasma membrane"/>
    <property type="evidence" value="ECO:0000314"/>
    <property type="project" value="UniProtKB"/>
</dbReference>
<dbReference type="GO" id="GO:0005886">
    <property type="term" value="C:plasma membrane"/>
    <property type="evidence" value="ECO:0000314"/>
    <property type="project" value="UniProtKB"/>
</dbReference>
<dbReference type="GO" id="GO:0014731">
    <property type="term" value="C:spectrin-associated cytoskeleton"/>
    <property type="evidence" value="ECO:0000315"/>
    <property type="project" value="UniProtKB"/>
</dbReference>
<dbReference type="GO" id="GO:0008519">
    <property type="term" value="F:ammonium channel activity"/>
    <property type="evidence" value="ECO:0000314"/>
    <property type="project" value="UniProtKB"/>
</dbReference>
<dbReference type="GO" id="GO:0030506">
    <property type="term" value="F:ankyrin binding"/>
    <property type="evidence" value="ECO:0000353"/>
    <property type="project" value="UniProtKB"/>
</dbReference>
<dbReference type="GO" id="GO:0035379">
    <property type="term" value="F:carbon dioxide transmembrane transporter activity"/>
    <property type="evidence" value="ECO:0000314"/>
    <property type="project" value="UniProtKB"/>
</dbReference>
<dbReference type="GO" id="GO:0097272">
    <property type="term" value="P:ammonium homeostasis"/>
    <property type="evidence" value="ECO:0000318"/>
    <property type="project" value="GO_Central"/>
</dbReference>
<dbReference type="GO" id="GO:0072488">
    <property type="term" value="P:ammonium transmembrane transport"/>
    <property type="evidence" value="ECO:0000314"/>
    <property type="project" value="UniProtKB"/>
</dbReference>
<dbReference type="GO" id="GO:0070634">
    <property type="term" value="P:transepithelial ammonium transport"/>
    <property type="evidence" value="ECO:0000314"/>
    <property type="project" value="UniProtKB"/>
</dbReference>
<dbReference type="FunFam" id="1.10.3430.10:FF:000001">
    <property type="entry name" value="Ammonium transporter Rh type C"/>
    <property type="match status" value="1"/>
</dbReference>
<dbReference type="Gene3D" id="1.10.3430.10">
    <property type="entry name" value="Ammonium transporter AmtB like domains"/>
    <property type="match status" value="1"/>
</dbReference>
<dbReference type="InterPro" id="IPR029020">
    <property type="entry name" value="Ammonium/urea_transptr"/>
</dbReference>
<dbReference type="InterPro" id="IPR024041">
    <property type="entry name" value="NH4_transpt_AmtB-like_dom"/>
</dbReference>
<dbReference type="InterPro" id="IPR002229">
    <property type="entry name" value="RhesusRHD"/>
</dbReference>
<dbReference type="PANTHER" id="PTHR11730">
    <property type="entry name" value="AMMONIUM TRANSPORTER"/>
    <property type="match status" value="1"/>
</dbReference>
<dbReference type="PANTHER" id="PTHR11730:SF42">
    <property type="entry name" value="AMMONIUM TRANSPORTER RH TYPE B"/>
    <property type="match status" value="1"/>
</dbReference>
<dbReference type="Pfam" id="PF00909">
    <property type="entry name" value="Ammonium_transp"/>
    <property type="match status" value="1"/>
</dbReference>
<dbReference type="PRINTS" id="PR00342">
    <property type="entry name" value="RHESUSRHD"/>
</dbReference>
<dbReference type="SUPFAM" id="SSF111352">
    <property type="entry name" value="Ammonium transporter"/>
    <property type="match status" value="1"/>
</dbReference>
<name>RHBG_HUMAN</name>
<sequence>MAGSPSRAAGRRLQLPLLCLFLQGATAVLFAVFVRYNHKTDAALWHRSNHSNADNEFYFRYPSFQDVHAMVFVGFGFLMVFLQRYGFSSVGFTFLLAAFALQWSTLVQGFLHSFHGGHIHVGVESMINADFCAGAVLISFGAVLGKTGPTQLLLMALLEVVLFGINEFVLLHLLGVRDAGGSMTIHTFGAYFGLVLSRVLYRPQLEKSKHRQGSVYHSDLFAMIGTIFLWIFWPSFNAALTALGAGQHRTALNTYYSLAASTLGTFALSALVGEDGRLDMVHIQNAALAGGVVVGTSSEMMLTPFGALAAGFLAGTVSTLGYKFFTPILESKFKVQDTCGVHNLHGMPGVLGALLGVLVAGLATHEAYGDGLESVFPLIAEGQRSATSQAMHQLFGLFVTLMFASVGGGLGGLLLKLPFLDSPPDSQHYEDQVHWQVPGEHEDKAQRPLRVEEADTQA</sequence>
<organism>
    <name type="scientific">Homo sapiens</name>
    <name type="common">Human</name>
    <dbReference type="NCBI Taxonomy" id="9606"/>
    <lineage>
        <taxon>Eukaryota</taxon>
        <taxon>Metazoa</taxon>
        <taxon>Chordata</taxon>
        <taxon>Craniata</taxon>
        <taxon>Vertebrata</taxon>
        <taxon>Euteleostomi</taxon>
        <taxon>Mammalia</taxon>
        <taxon>Eutheria</taxon>
        <taxon>Euarchontoglires</taxon>
        <taxon>Primates</taxon>
        <taxon>Haplorrhini</taxon>
        <taxon>Catarrhini</taxon>
        <taxon>Hominidae</taxon>
        <taxon>Homo</taxon>
    </lineage>
</organism>
<gene>
    <name evidence="19" type="primary">RHBG</name>
</gene>
<feature type="chain" id="PRO_0000283597" description="Ammonium transporter Rh type B">
    <location>
        <begin position="1"/>
        <end position="458"/>
    </location>
</feature>
<feature type="topological domain" description="Cytoplasmic" evidence="2">
    <location>
        <begin position="1"/>
        <end position="13"/>
    </location>
</feature>
<feature type="transmembrane region" description="Helical" evidence="2">
    <location>
        <begin position="14"/>
        <end position="34"/>
    </location>
</feature>
<feature type="topological domain" description="Extracellular" evidence="2">
    <location>
        <begin position="35"/>
        <end position="61"/>
    </location>
</feature>
<feature type="transmembrane region" description="Helical" evidence="2">
    <location>
        <begin position="62"/>
        <end position="82"/>
    </location>
</feature>
<feature type="topological domain" description="Cytoplasmic" evidence="2">
    <location>
        <begin position="83"/>
        <end position="86"/>
    </location>
</feature>
<feature type="transmembrane region" description="Helical" evidence="2">
    <location>
        <begin position="87"/>
        <end position="107"/>
    </location>
</feature>
<feature type="topological domain" description="Extracellular" evidence="2">
    <location>
        <begin position="108"/>
        <end position="124"/>
    </location>
</feature>
<feature type="transmembrane region" description="Helical" evidence="2">
    <location>
        <begin position="125"/>
        <end position="145"/>
    </location>
</feature>
<feature type="topological domain" description="Cytoplasmic" evidence="2">
    <location>
        <begin position="146"/>
        <end position="149"/>
    </location>
</feature>
<feature type="transmembrane region" description="Helical" evidence="2">
    <location>
        <begin position="150"/>
        <end position="170"/>
    </location>
</feature>
<feature type="topological domain" description="Extracellular" evidence="2">
    <location>
        <begin position="171"/>
        <end position="178"/>
    </location>
</feature>
<feature type="transmembrane region" description="Helical" evidence="2">
    <location>
        <begin position="179"/>
        <end position="201"/>
    </location>
</feature>
<feature type="topological domain" description="Cytoplasmic" evidence="2">
    <location>
        <begin position="202"/>
        <end position="219"/>
    </location>
</feature>
<feature type="transmembrane region" description="Helical" evidence="2">
    <location>
        <begin position="220"/>
        <end position="240"/>
    </location>
</feature>
<feature type="topological domain" description="Extracellular" evidence="2">
    <location>
        <begin position="241"/>
        <end position="251"/>
    </location>
</feature>
<feature type="transmembrane region" description="Helical" evidence="2">
    <location>
        <begin position="252"/>
        <end position="272"/>
    </location>
</feature>
<feature type="topological domain" description="Cytoplasmic" evidence="2">
    <location>
        <begin position="273"/>
        <end position="282"/>
    </location>
</feature>
<feature type="transmembrane region" description="Helical" evidence="2">
    <location>
        <begin position="283"/>
        <end position="303"/>
    </location>
</feature>
<feature type="topological domain" description="Extracellular" evidence="2">
    <location>
        <position position="304"/>
    </location>
</feature>
<feature type="transmembrane region" description="Helical" evidence="2">
    <location>
        <begin position="305"/>
        <end position="325"/>
    </location>
</feature>
<feature type="topological domain" description="Cytoplasmic" evidence="2">
    <location>
        <begin position="326"/>
        <end position="346"/>
    </location>
</feature>
<feature type="transmembrane region" description="Helical" evidence="2">
    <location>
        <begin position="347"/>
        <end position="367"/>
    </location>
</feature>
<feature type="topological domain" description="Extracellular" evidence="2">
    <location>
        <begin position="368"/>
        <end position="393"/>
    </location>
</feature>
<feature type="transmembrane region" description="Helical" evidence="2">
    <location>
        <begin position="394"/>
        <end position="414"/>
    </location>
</feature>
<feature type="topological domain" description="Cytoplasmic" evidence="2">
    <location>
        <begin position="415"/>
        <end position="458"/>
    </location>
</feature>
<feature type="region of interest" description="Interaction with ANK3" evidence="8">
    <location>
        <begin position="416"/>
        <end position="424"/>
    </location>
</feature>
<feature type="region of interest" description="Disordered" evidence="3">
    <location>
        <begin position="436"/>
        <end position="458"/>
    </location>
</feature>
<feature type="glycosylation site" description="N-linked (GlcNAc...) asparagine" evidence="2">
    <location>
        <position position="49"/>
    </location>
</feature>
<feature type="splice variant" id="VSP_024340" description="In isoform 3, isoform 4 and isoform 5." evidence="12 13 14">
    <location>
        <begin position="1"/>
        <end position="69"/>
    </location>
</feature>
<feature type="splice variant" id="VSP_024341" description="In isoform 2." evidence="14">
    <location>
        <begin position="1"/>
        <end position="30"/>
    </location>
</feature>
<feature type="splice variant" id="VSP_024342" description="In isoform 2." evidence="14">
    <original>AVFVRYNHKTDAALWHRSNHSNADNEFYFRYPS</original>
    <variation>MNFTFATQKSLTLLPRLECNGAISAHCNLHLPG</variation>
    <location>
        <begin position="31"/>
        <end position="63"/>
    </location>
</feature>
<feature type="splice variant" id="VSP_024343" description="In isoform 3." evidence="13">
    <original>G</original>
    <variation>GVRVWGGMESGVGGGQGQPLSQERGGGGGVLPLTPPPQ</variation>
    <location>
        <position position="175"/>
    </location>
</feature>
<feature type="splice variant" id="VSP_037136" description="In isoform 5." evidence="12">
    <location>
        <begin position="372"/>
        <end position="458"/>
    </location>
</feature>
<feature type="sequence variant" id="VAR_031497" description="In dbSNP:rs2245623." evidence="5 11">
    <original>G</original>
    <variation>D</variation>
    <location>
        <position position="76"/>
    </location>
</feature>
<feature type="sequence variant" id="VAR_031498" description="In dbSNP:rs11586833." evidence="7">
    <original>V</original>
    <variation>D</variation>
    <location>
        <position position="143"/>
    </location>
</feature>
<feature type="sequence variant" id="VAR_031499" description="In dbSNP:rs3748569." evidence="7">
    <original>G</original>
    <variation>R</variation>
    <location>
        <position position="315"/>
    </location>
</feature>
<feature type="sequence variant" id="VAR_053637" description="In dbSNP:rs3748567.">
    <original>C</original>
    <variation>R</variation>
    <location>
        <position position="339"/>
    </location>
</feature>
<feature type="mutagenesis site" description="Impairs protein stability resulting in loss of transporter activity." evidence="10">
    <original>D</original>
    <variation>N</variation>
    <location>
        <position position="178"/>
    </location>
</feature>
<feature type="mutagenesis site" description="Loss of interaction with ANK3. Intracellular retention; when associated with A-420 and A-421." evidence="8">
    <original>F</original>
    <variation>A</variation>
    <location>
        <position position="419"/>
    </location>
</feature>
<feature type="mutagenesis site" description="Partial loss of interaction with ANK3. Intracellular retention; when associated with A-419 and A-421." evidence="8">
    <original>L</original>
    <variation>A</variation>
    <location>
        <position position="420"/>
    </location>
</feature>
<feature type="mutagenesis site" description="Partial loss of interaction with ANK3. Intracellular retention; when associated with A-419 and A-420." evidence="8">
    <original>D</original>
    <variation>A</variation>
    <location>
        <position position="421"/>
    </location>
</feature>
<feature type="sequence conflict" description="In Ref. 6; AAH65218." evidence="15" ref="6">
    <original>H</original>
    <variation>R</variation>
    <location>
        <position position="428"/>
    </location>
</feature>
<protein>
    <recommendedName>
        <fullName evidence="15">Ammonium transporter Rh type B</fullName>
    </recommendedName>
    <alternativeName>
        <fullName>Rhesus blood group family type B glycoprotein</fullName>
        <shortName>Rh family type B glycoprotein</shortName>
        <shortName>Rh type B glycoprotein</shortName>
    </alternativeName>
</protein>
<accession>Q9H310</accession>
<accession>A8K475</accession>
<accession>Q5SZW4</accession>
<accession>Q5SZW6</accession>
<accession>Q5SZW7</accession>
<accession>Q6P193</accession>
<accession>Q6YJI2</accession>
<accession>Q6YJI3</accession>
<keyword id="KW-0025">Alternative splicing</keyword>
<keyword id="KW-0924">Ammonia transport</keyword>
<keyword id="KW-1003">Cell membrane</keyword>
<keyword id="KW-0325">Glycoprotein</keyword>
<keyword id="KW-0472">Membrane</keyword>
<keyword id="KW-1185">Reference proteome</keyword>
<keyword id="KW-0812">Transmembrane</keyword>
<keyword id="KW-1133">Transmembrane helix</keyword>
<keyword id="KW-0813">Transport</keyword>
<comment type="function">
    <text evidence="6 9 10">Ammonium transporter involved in the maintenance of acid-base homeostasis. Transports ammonium and its related derivative methylammonium across the basolateral plasma membrane of epithelial cells likely contributing to renal transepithelial ammonia transport and ammonia metabolism. May transport either NH4(+) or NH3 ammonia species predominantly mediating an electrogenic NH4(+) transport (PubMed:15284342, PubMed:15929723, PubMed:24077989). May act as a CO2 channel providing for renal acid secretion (PubMed:24077989).</text>
</comment>
<comment type="catalytic activity">
    <reaction evidence="6 9 10">
        <text>NH4(+)(in) = NH4(+)(out)</text>
        <dbReference type="Rhea" id="RHEA:28747"/>
        <dbReference type="ChEBI" id="CHEBI:28938"/>
    </reaction>
    <physiologicalReaction direction="left-to-right" evidence="17">
        <dbReference type="Rhea" id="RHEA:28748"/>
    </physiologicalReaction>
    <physiologicalReaction direction="right-to-left" evidence="16 17 18">
        <dbReference type="Rhea" id="RHEA:28749"/>
    </physiologicalReaction>
</comment>
<comment type="catalytic activity">
    <reaction evidence="6 9">
        <text>methylamine(out) = methylamine(in)</text>
        <dbReference type="Rhea" id="RHEA:74391"/>
        <dbReference type="ChEBI" id="CHEBI:59338"/>
    </reaction>
    <physiologicalReaction direction="left-to-right" evidence="16 17">
        <dbReference type="Rhea" id="RHEA:74392"/>
    </physiologicalReaction>
</comment>
<comment type="catalytic activity">
    <reaction evidence="10">
        <text>CO2(out) = CO2(in)</text>
        <dbReference type="Rhea" id="RHEA:74891"/>
        <dbReference type="ChEBI" id="CHEBI:16526"/>
    </reaction>
    <physiologicalReaction direction="left-to-right" evidence="18">
        <dbReference type="Rhea" id="RHEA:74892"/>
    </physiologicalReaction>
</comment>
<comment type="biophysicochemical properties">
    <kinetics>
        <KM evidence="6">2.6 mM for methylamine</KM>
    </kinetics>
</comment>
<comment type="subunit">
    <text evidence="8">Interacts (via C-terminus) with ANK2 and ANK3; required for targeting to the basolateral membrane.</text>
</comment>
<comment type="interaction">
    <interactant intactId="EBI-12006870">
        <id>Q9H310-3</id>
    </interactant>
    <interactant intactId="EBI-3867333">
        <id>A8MQ03</id>
        <label>CYSRT1</label>
    </interactant>
    <organismsDiffer>false</organismsDiffer>
    <experiments>3</experiments>
</comment>
<comment type="interaction">
    <interactant intactId="EBI-12006870">
        <id>Q9H310-3</id>
    </interactant>
    <interactant intactId="EBI-12811111">
        <id>Q8IUB9</id>
        <label>KRTAP19-1</label>
    </interactant>
    <organismsDiffer>false</organismsDiffer>
    <experiments>3</experiments>
</comment>
<comment type="interaction">
    <interactant intactId="EBI-12006870">
        <id>Q9H310-3</id>
    </interactant>
    <interactant intactId="EBI-12196745">
        <id>Q3LHN2</id>
        <label>KRTAP19-2</label>
    </interactant>
    <organismsDiffer>false</organismsDiffer>
    <experiments>3</experiments>
</comment>
<comment type="subcellular location">
    <subcellularLocation>
        <location evidence="4 9">Cell membrane</location>
        <topology>Multi-pass membrane protein</topology>
    </subcellularLocation>
    <subcellularLocation>
        <location evidence="8">Basolateral cell membrane</location>
        <topology evidence="2">Multi-pass membrane protein</topology>
    </subcellularLocation>
</comment>
<comment type="alternative products">
    <event type="alternative splicing"/>
    <isoform>
        <id>Q9H310-1</id>
        <name>1</name>
        <sequence type="displayed"/>
    </isoform>
    <isoform>
        <id>Q9H310-2</id>
        <name>2</name>
        <name>RhBG-2A</name>
        <sequence type="described" ref="VSP_024341 VSP_024342"/>
    </isoform>
    <isoform>
        <id>Q9H310-3</id>
        <name>3</name>
        <sequence type="described" ref="VSP_024340 VSP_024343"/>
    </isoform>
    <isoform>
        <id>Q9H310-4</id>
        <name>4</name>
        <name>RhBG-1A</name>
        <sequence type="described" ref="VSP_024340"/>
    </isoform>
    <isoform>
        <id>Q9H310-5</id>
        <name>5</name>
        <sequence type="described" ref="VSP_024340 VSP_037136"/>
    </isoform>
</comment>
<comment type="tissue specificity">
    <text evidence="4">Specifically expressed in kidney. Also detected in liver and ovary.</text>
</comment>
<comment type="developmental stage">
    <text evidence="4">Fetally expressed by kidney and to a lower extent in liver.</text>
</comment>
<comment type="PTM">
    <text evidence="1">N-glycosylated.</text>
</comment>
<comment type="similarity">
    <text evidence="15">Belongs to the ammonium transporter (TC 2.A.49) family. Rh subfamily.</text>
</comment>
<comment type="sequence caution" evidence="15">
    <conflict type="frameshift">
        <sequence resource="EMBL-CDS" id="AAH65218"/>
    </conflict>
</comment>